<protein>
    <recommendedName>
        <fullName evidence="3">Delta-buthitoxin-Hj2a</fullName>
        <shortName evidence="5">Delta-BUTX-Hj2a</shortName>
    </recommendedName>
</protein>
<organism>
    <name type="scientific">Hottentotta judaicus</name>
    <name type="common">Black scorpion</name>
    <name type="synonym">Buthotus judaicus</name>
    <dbReference type="NCBI Taxonomy" id="6863"/>
    <lineage>
        <taxon>Eukaryota</taxon>
        <taxon>Metazoa</taxon>
        <taxon>Ecdysozoa</taxon>
        <taxon>Arthropoda</taxon>
        <taxon>Chelicerata</taxon>
        <taxon>Arachnida</taxon>
        <taxon>Scorpiones</taxon>
        <taxon>Buthida</taxon>
        <taxon>Buthoidea</taxon>
        <taxon>Buthidae</taxon>
        <taxon>Hottentotta</taxon>
    </lineage>
</organism>
<sequence>GRDAYIADDKNCVYTCAKNSYCNNECTKNGAESGYCQWLGKYGNGCWCKNLPDKVPIRIPGPCR</sequence>
<accession>P0DQN9</accession>
<dbReference type="SMR" id="P0DQN9"/>
<dbReference type="GO" id="GO:0005576">
    <property type="term" value="C:extracellular region"/>
    <property type="evidence" value="ECO:0007669"/>
    <property type="project" value="UniProtKB-SubCell"/>
</dbReference>
<dbReference type="GO" id="GO:0019871">
    <property type="term" value="F:sodium channel inhibitor activity"/>
    <property type="evidence" value="ECO:0007669"/>
    <property type="project" value="InterPro"/>
</dbReference>
<dbReference type="GO" id="GO:0090729">
    <property type="term" value="F:toxin activity"/>
    <property type="evidence" value="ECO:0007669"/>
    <property type="project" value="UniProtKB-KW"/>
</dbReference>
<dbReference type="GO" id="GO:0006952">
    <property type="term" value="P:defense response"/>
    <property type="evidence" value="ECO:0007669"/>
    <property type="project" value="InterPro"/>
</dbReference>
<dbReference type="CDD" id="cd23106">
    <property type="entry name" value="neurotoxins_LC_scorpion"/>
    <property type="match status" value="1"/>
</dbReference>
<dbReference type="FunFam" id="3.30.30.10:FF:000002">
    <property type="entry name" value="Alpha-like toxin BmK-M1"/>
    <property type="match status" value="1"/>
</dbReference>
<dbReference type="Gene3D" id="3.30.30.10">
    <property type="entry name" value="Knottin, scorpion toxin-like"/>
    <property type="match status" value="1"/>
</dbReference>
<dbReference type="InterPro" id="IPR044062">
    <property type="entry name" value="LCN-type_CS_alpha_beta_dom"/>
</dbReference>
<dbReference type="InterPro" id="IPR003614">
    <property type="entry name" value="Scorpion_toxin-like"/>
</dbReference>
<dbReference type="InterPro" id="IPR036574">
    <property type="entry name" value="Scorpion_toxin-like_sf"/>
</dbReference>
<dbReference type="InterPro" id="IPR018218">
    <property type="entry name" value="Scorpion_toxinL"/>
</dbReference>
<dbReference type="InterPro" id="IPR002061">
    <property type="entry name" value="Scorpion_toxinL/defensin"/>
</dbReference>
<dbReference type="Pfam" id="PF00537">
    <property type="entry name" value="Toxin_3"/>
    <property type="match status" value="1"/>
</dbReference>
<dbReference type="PRINTS" id="PR00285">
    <property type="entry name" value="SCORPNTOXIN"/>
</dbReference>
<dbReference type="PRINTS" id="PR00284">
    <property type="entry name" value="TOXIN"/>
</dbReference>
<dbReference type="SMART" id="SM00505">
    <property type="entry name" value="Knot1"/>
    <property type="match status" value="1"/>
</dbReference>
<dbReference type="SUPFAM" id="SSF57095">
    <property type="entry name" value="Scorpion toxin-like"/>
    <property type="match status" value="1"/>
</dbReference>
<dbReference type="PROSITE" id="PS51863">
    <property type="entry name" value="LCN_CSAB"/>
    <property type="match status" value="1"/>
</dbReference>
<evidence type="ECO:0000250" key="1">
    <source>
        <dbReference type="UniProtKB" id="P0DQN8"/>
    </source>
</evidence>
<evidence type="ECO:0000269" key="2">
    <source>
    </source>
</evidence>
<evidence type="ECO:0000303" key="3">
    <source>
    </source>
</evidence>
<evidence type="ECO:0000305" key="4"/>
<evidence type="ECO:0000305" key="5">
    <source>
    </source>
</evidence>
<proteinExistence type="evidence at protein level"/>
<comment type="function">
    <text evidence="2">This non-amidated recombinant toxin slows fast inactivation on Nav1.1/SCN1A (EC(50)=52.8 nM), Nav1.4/SN4A (EC(50)=32 nM), Nav1.5/SCN5A (EC(50)=116.7 nM), Nav1.6/SCN8A (EC(50)=46.3 nM), and Nav1.7/SCN9A (EC(50)=147.4 nM) voltage-gated sodium channels (PubMed:32259093). On Nav1.1/SCN1A channel, acts as an agonist by inducing a shift in both the voltage dependence of channel inactivation (alpha-toxin activity) and activation (beta-toxin activity) (PubMed:32259093).</text>
</comment>
<comment type="subcellular location">
    <subcellularLocation>
        <location evidence="2">Secreted</location>
    </subcellularLocation>
</comment>
<comment type="tissue specificity">
    <text evidence="5">Expressed by the venom gland.</text>
</comment>
<comment type="domain">
    <text evidence="1">Has the structural arrangement of an alpha-helix connected to antiparallel beta-sheets by disulfide bonds (CS-alpha/beta).</text>
</comment>
<comment type="mass spectrometry">
    <text>Monoisotopic mass.</text>
</comment>
<comment type="pharmaceutical">
    <text evidence="5">Lead molecule for the development of selective Nav1.1/SCN1A agonists for the treatment of Dravet syndrome epilepsy.</text>
</comment>
<comment type="miscellaneous">
    <text evidence="2">Negative results: does not show effects on Nav1.2/SCN2A, and Nav1.3/SCN3A voltage-gated sodium channels (PubMed:32259093). Does not show insecticidal activity (PubMed:32259093).</text>
</comment>
<comment type="miscellaneous">
    <text evidence="5">The complete amino acid sequence was obtained by combining proteomic and transcriptomic techniques.</text>
</comment>
<comment type="similarity">
    <text evidence="4">Belongs to the long (4 C-C) scorpion toxin superfamily. Sodium channel inhibitor family. Alpha subfamily.</text>
</comment>
<reference key="1">
    <citation type="journal article" date="2020" name="ACS Pharmacol. Transl. Sci.">
        <title>Venom peptides with dual modulatory activity on the voltage-gated sodium channel Nav1.1 provide novel leads for development of antiepileptic drugs.</title>
        <authorList>
            <person name="Chow C.Y."/>
            <person name="Chin Y.K."/>
            <person name="Walker A.A."/>
            <person name="Guo S."/>
            <person name="Blomster L.V."/>
            <person name="Ward M.J."/>
            <person name="Herzig V."/>
            <person name="Rokyta D.R."/>
            <person name="King G.F."/>
        </authorList>
    </citation>
    <scope>PROTEIN SEQUENCE</scope>
    <scope>FUNCTION</scope>
    <scope>MASS SPECTROMETRY</scope>
    <scope>RECOMBINANT EXPRESSION</scope>
    <scope>SUBCELLULAR LOCATION</scope>
    <scope>STRUCTURE BY NMR</scope>
    <scope>DISULFIDE BOND</scope>
    <scope>AMIDATION AT ARG-64</scope>
    <scope>PHARMACEUTICAL</scope>
    <source>
        <tissue>Venom</tissue>
        <tissue>Venom gland</tissue>
    </source>
</reference>
<keyword id="KW-0027">Amidation</keyword>
<keyword id="KW-0903">Direct protein sequencing</keyword>
<keyword id="KW-1015">Disulfide bond</keyword>
<keyword id="KW-0872">Ion channel impairing toxin</keyword>
<keyword id="KW-0528">Neurotoxin</keyword>
<keyword id="KW-0582">Pharmaceutical</keyword>
<keyword id="KW-0964">Secreted</keyword>
<keyword id="KW-0800">Toxin</keyword>
<keyword id="KW-0738">Voltage-gated sodium channel impairing toxin</keyword>
<name>DEL2A_HOTJU</name>
<feature type="chain" id="PRO_0000451605" description="Delta-buthitoxin-Hj2a" evidence="2">
    <location>
        <begin position="1"/>
        <end position="64"/>
    </location>
</feature>
<feature type="modified residue" description="Arginine amide" evidence="2">
    <location>
        <position position="64"/>
    </location>
</feature>
<feature type="disulfide bond" evidence="1">
    <location>
        <begin position="12"/>
        <end position="63"/>
    </location>
</feature>
<feature type="disulfide bond" evidence="1">
    <location>
        <begin position="16"/>
        <end position="36"/>
    </location>
</feature>
<feature type="disulfide bond" evidence="1">
    <location>
        <begin position="22"/>
        <end position="46"/>
    </location>
</feature>
<feature type="disulfide bond" evidence="1">
    <location>
        <begin position="26"/>
        <end position="48"/>
    </location>
</feature>
<feature type="sequence conflict" description="In Ref. 1; AA sequence." evidence="4" ref="1">
    <original>N</original>
    <variation>D</variation>
    <location>
        <position position="24"/>
    </location>
</feature>